<keyword id="KW-0050">Antiport</keyword>
<keyword id="KW-0997">Cell inner membrane</keyword>
<keyword id="KW-1003">Cell membrane</keyword>
<keyword id="KW-0406">Ion transport</keyword>
<keyword id="KW-0472">Membrane</keyword>
<keyword id="KW-0915">Sodium</keyword>
<keyword id="KW-0739">Sodium transport</keyword>
<keyword id="KW-0812">Transmembrane</keyword>
<keyword id="KW-1133">Transmembrane helix</keyword>
<keyword id="KW-0813">Transport</keyword>
<dbReference type="EMBL" id="AP007255">
    <property type="protein sequence ID" value="BAE51249.1"/>
    <property type="molecule type" value="Genomic_DNA"/>
</dbReference>
<dbReference type="RefSeq" id="WP_011384826.1">
    <property type="nucleotide sequence ID" value="NC_007626.1"/>
</dbReference>
<dbReference type="SMR" id="Q2W4H6"/>
<dbReference type="STRING" id="342108.amb2445"/>
<dbReference type="KEGG" id="mag:amb2445"/>
<dbReference type="HOGENOM" id="CLU_015803_1_0_5"/>
<dbReference type="OrthoDB" id="9808135at2"/>
<dbReference type="Proteomes" id="UP000007058">
    <property type="component" value="Chromosome"/>
</dbReference>
<dbReference type="GO" id="GO:0005886">
    <property type="term" value="C:plasma membrane"/>
    <property type="evidence" value="ECO:0007669"/>
    <property type="project" value="UniProtKB-SubCell"/>
</dbReference>
<dbReference type="GO" id="GO:0015385">
    <property type="term" value="F:sodium:proton antiporter activity"/>
    <property type="evidence" value="ECO:0007669"/>
    <property type="project" value="TreeGrafter"/>
</dbReference>
<dbReference type="GO" id="GO:0006885">
    <property type="term" value="P:regulation of pH"/>
    <property type="evidence" value="ECO:0007669"/>
    <property type="project" value="InterPro"/>
</dbReference>
<dbReference type="Gene3D" id="1.20.1530.10">
    <property type="entry name" value="Na+/H+ antiporter like domain"/>
    <property type="match status" value="1"/>
</dbReference>
<dbReference type="HAMAP" id="MF_01844">
    <property type="entry name" value="NhaA"/>
    <property type="match status" value="1"/>
</dbReference>
<dbReference type="InterPro" id="IPR023171">
    <property type="entry name" value="Na/H_antiporter_dom_sf"/>
</dbReference>
<dbReference type="InterPro" id="IPR004670">
    <property type="entry name" value="NhaA"/>
</dbReference>
<dbReference type="NCBIfam" id="TIGR00773">
    <property type="entry name" value="NhaA"/>
    <property type="match status" value="1"/>
</dbReference>
<dbReference type="NCBIfam" id="NF007111">
    <property type="entry name" value="PRK09560.1"/>
    <property type="match status" value="1"/>
</dbReference>
<dbReference type="NCBIfam" id="NF007112">
    <property type="entry name" value="PRK09561.1"/>
    <property type="match status" value="1"/>
</dbReference>
<dbReference type="PANTHER" id="PTHR30341:SF0">
    <property type="entry name" value="NA(+)_H(+) ANTIPORTER NHAA"/>
    <property type="match status" value="1"/>
</dbReference>
<dbReference type="PANTHER" id="PTHR30341">
    <property type="entry name" value="SODIUM ION/PROTON ANTIPORTER NHAA-RELATED"/>
    <property type="match status" value="1"/>
</dbReference>
<dbReference type="Pfam" id="PF06965">
    <property type="entry name" value="Na_H_antiport_1"/>
    <property type="match status" value="1"/>
</dbReference>
<sequence>MAAEKPSSIFRDFLDSEAAGGVILMVTAALALVIANSPLSGAYFAFLQAKFLGMSVLHGINDGLMAVFFLLVGLEIKREVLGGQLSNWSQRILPGLAALGGMVVPALVFLALNAKSPETVRGWAVPTATDIAFALGVLALLGPRVPASLKIFLTALAIIDDLGAVLVIALFYTAKLSWPALVAVAAILALLAALNRLRVRSLWPYLLVGAGLWGAMLQSGVHATVAGIALALTIPMGDEQHSPLHRLEHGLAPWVGYGIVPIFGFANAGVSFAGLEPSRVLQSLPLGIALGLLFGKQIGVFGTAWMAIWLGFAARPEGAGTAQLYGVAVLCGIGFTMSLFIGALAFGELPASSDAVKVGVLAGSALSAILGSLVLLRCRSSSS</sequence>
<gene>
    <name evidence="1" type="primary">nhaA</name>
    <name type="ordered locus">amb2445</name>
</gene>
<organism>
    <name type="scientific">Paramagnetospirillum magneticum (strain ATCC 700264 / AMB-1)</name>
    <name type="common">Magnetospirillum magneticum</name>
    <dbReference type="NCBI Taxonomy" id="342108"/>
    <lineage>
        <taxon>Bacteria</taxon>
        <taxon>Pseudomonadati</taxon>
        <taxon>Pseudomonadota</taxon>
        <taxon>Alphaproteobacteria</taxon>
        <taxon>Rhodospirillales</taxon>
        <taxon>Magnetospirillaceae</taxon>
        <taxon>Paramagnetospirillum</taxon>
    </lineage>
</organism>
<name>NHAA_PARM1</name>
<reference key="1">
    <citation type="journal article" date="2005" name="DNA Res.">
        <title>Complete genome sequence of the facultative anaerobic magnetotactic bacterium Magnetospirillum sp. strain AMB-1.</title>
        <authorList>
            <person name="Matsunaga T."/>
            <person name="Okamura Y."/>
            <person name="Fukuda Y."/>
            <person name="Wahyudi A.T."/>
            <person name="Murase Y."/>
            <person name="Takeyama H."/>
        </authorList>
    </citation>
    <scope>NUCLEOTIDE SEQUENCE [LARGE SCALE GENOMIC DNA]</scope>
    <source>
        <strain>ATCC 700264 / AMB-1</strain>
    </source>
</reference>
<feature type="chain" id="PRO_0000334334" description="Na(+)/H(+) antiporter NhaA">
    <location>
        <begin position="1"/>
        <end position="383"/>
    </location>
</feature>
<feature type="transmembrane region" description="Helical" evidence="1">
    <location>
        <begin position="19"/>
        <end position="39"/>
    </location>
</feature>
<feature type="transmembrane region" description="Helical" evidence="1">
    <location>
        <begin position="56"/>
        <end position="76"/>
    </location>
</feature>
<feature type="transmembrane region" description="Helical" evidence="1">
    <location>
        <begin position="92"/>
        <end position="112"/>
    </location>
</feature>
<feature type="transmembrane region" description="Helical" evidence="1">
    <location>
        <begin position="122"/>
        <end position="142"/>
    </location>
</feature>
<feature type="transmembrane region" description="Helical" evidence="1">
    <location>
        <begin position="151"/>
        <end position="171"/>
    </location>
</feature>
<feature type="transmembrane region" description="Helical" evidence="1">
    <location>
        <begin position="174"/>
        <end position="194"/>
    </location>
</feature>
<feature type="transmembrane region" description="Helical" evidence="1">
    <location>
        <begin position="212"/>
        <end position="232"/>
    </location>
</feature>
<feature type="transmembrane region" description="Helical" evidence="1">
    <location>
        <begin position="255"/>
        <end position="275"/>
    </location>
</feature>
<feature type="transmembrane region" description="Helical" evidence="1">
    <location>
        <begin position="292"/>
        <end position="312"/>
    </location>
</feature>
<feature type="transmembrane region" description="Helical" evidence="1">
    <location>
        <begin position="326"/>
        <end position="346"/>
    </location>
</feature>
<feature type="transmembrane region" description="Helical" evidence="1">
    <location>
        <begin position="356"/>
        <end position="376"/>
    </location>
</feature>
<accession>Q2W4H6</accession>
<proteinExistence type="inferred from homology"/>
<evidence type="ECO:0000255" key="1">
    <source>
        <dbReference type="HAMAP-Rule" id="MF_01844"/>
    </source>
</evidence>
<protein>
    <recommendedName>
        <fullName evidence="1">Na(+)/H(+) antiporter NhaA</fullName>
    </recommendedName>
    <alternativeName>
        <fullName evidence="1">Sodium/proton antiporter NhaA</fullName>
    </alternativeName>
</protein>
<comment type="function">
    <text evidence="1">Na(+)/H(+) antiporter that extrudes sodium in exchange for external protons.</text>
</comment>
<comment type="catalytic activity">
    <reaction evidence="1">
        <text>Na(+)(in) + 2 H(+)(out) = Na(+)(out) + 2 H(+)(in)</text>
        <dbReference type="Rhea" id="RHEA:29251"/>
        <dbReference type="ChEBI" id="CHEBI:15378"/>
        <dbReference type="ChEBI" id="CHEBI:29101"/>
    </reaction>
    <physiologicalReaction direction="left-to-right" evidence="1">
        <dbReference type="Rhea" id="RHEA:29252"/>
    </physiologicalReaction>
</comment>
<comment type="subcellular location">
    <subcellularLocation>
        <location evidence="1">Cell inner membrane</location>
        <topology evidence="1">Multi-pass membrane protein</topology>
    </subcellularLocation>
</comment>
<comment type="similarity">
    <text evidence="1">Belongs to the NhaA Na(+)/H(+) (TC 2.A.33) antiporter family.</text>
</comment>